<name>CSPLE_ORYSJ</name>
<proteinExistence type="evidence at transcript level"/>
<accession>Q0IN16</accession>
<accession>Q2QPX4</accession>
<sequence length="198" mass="19759">MAAAMGLERKAKVAEVALRCAVCALAALAAALVGTGSQTRTFFSLEKKARFTDMKALVLLVAAHGAAAVYSLLQLARCAAAAAWKGGSNGGAAVVAWSVFSCDQAVAYALMAATAAALQSSVVGKRGQPELQWMPVCGLYGAFCRRVGEGLAAAVAAGLAAVLLAAVSAFNLFRLYGGGGGGRKSSAGAVSGNGANTW</sequence>
<keyword id="KW-0025">Alternative splicing</keyword>
<keyword id="KW-1003">Cell membrane</keyword>
<keyword id="KW-0472">Membrane</keyword>
<keyword id="KW-1185">Reference proteome</keyword>
<keyword id="KW-0812">Transmembrane</keyword>
<keyword id="KW-1133">Transmembrane helix</keyword>
<protein>
    <recommendedName>
        <fullName>CASP-like protein 2B1</fullName>
        <shortName>OsCASPL2B1</shortName>
    </recommendedName>
</protein>
<feature type="chain" id="PRO_0000370301" description="CASP-like protein 2B1">
    <location>
        <begin position="1"/>
        <end position="198"/>
    </location>
</feature>
<feature type="topological domain" description="Cytoplasmic" evidence="2">
    <location>
        <begin position="1"/>
        <end position="12"/>
    </location>
</feature>
<feature type="transmembrane region" description="Helical" evidence="2">
    <location>
        <begin position="13"/>
        <end position="33"/>
    </location>
</feature>
<feature type="topological domain" description="Extracellular" evidence="2">
    <location>
        <begin position="34"/>
        <end position="55"/>
    </location>
</feature>
<feature type="transmembrane region" description="Helical" evidence="2">
    <location>
        <begin position="56"/>
        <end position="76"/>
    </location>
</feature>
<feature type="topological domain" description="Cytoplasmic" evidence="2">
    <location>
        <begin position="77"/>
        <end position="91"/>
    </location>
</feature>
<feature type="transmembrane region" description="Helical" evidence="2">
    <location>
        <begin position="92"/>
        <end position="112"/>
    </location>
</feature>
<feature type="topological domain" description="Extracellular" evidence="2">
    <location>
        <begin position="113"/>
        <end position="149"/>
    </location>
</feature>
<feature type="transmembrane region" description="Helical" evidence="2">
    <location>
        <begin position="150"/>
        <end position="170"/>
    </location>
</feature>
<feature type="topological domain" description="Cytoplasmic" evidence="2">
    <location>
        <begin position="171"/>
        <end position="198"/>
    </location>
</feature>
<feature type="splice variant" id="VSP_041636" description="In isoform 2." evidence="3">
    <original>LMAATAAALQSSVVGKRGQPELQWMPVCGLYGAFCRRVGEGLAAAVAAGLAAVLLAAVSAFNLFRLYGGGGGGRKSSAGAVSGNGANTW</original>
    <variation>PSPRASPPCSSPPSPRSTCSASTAAAAAAARAAPAPSPAMARTRGRQG</variation>
    <location>
        <begin position="110"/>
        <end position="198"/>
    </location>
</feature>
<reference key="1">
    <citation type="journal article" date="2005" name="BMC Biol.">
        <title>The sequence of rice chromosomes 11 and 12, rich in disease resistance genes and recent gene duplications.</title>
        <authorList>
            <consortium name="The rice chromosomes 11 and 12 sequencing consortia"/>
        </authorList>
    </citation>
    <scope>NUCLEOTIDE SEQUENCE [LARGE SCALE GENOMIC DNA]</scope>
    <source>
        <strain>cv. Nipponbare</strain>
    </source>
</reference>
<reference key="2">
    <citation type="journal article" date="2005" name="Nature">
        <title>The map-based sequence of the rice genome.</title>
        <authorList>
            <consortium name="International rice genome sequencing project (IRGSP)"/>
        </authorList>
    </citation>
    <scope>NUCLEOTIDE SEQUENCE [LARGE SCALE GENOMIC DNA]</scope>
    <source>
        <strain>cv. Nipponbare</strain>
    </source>
</reference>
<reference key="3">
    <citation type="journal article" date="2008" name="Nucleic Acids Res.">
        <title>The rice annotation project database (RAP-DB): 2008 update.</title>
        <authorList>
            <consortium name="The rice annotation project (RAP)"/>
        </authorList>
    </citation>
    <scope>GENOME REANNOTATION</scope>
    <source>
        <strain>cv. Nipponbare</strain>
    </source>
</reference>
<reference key="4">
    <citation type="journal article" date="2013" name="Rice">
        <title>Improvement of the Oryza sativa Nipponbare reference genome using next generation sequence and optical map data.</title>
        <authorList>
            <person name="Kawahara Y."/>
            <person name="de la Bastide M."/>
            <person name="Hamilton J.P."/>
            <person name="Kanamori H."/>
            <person name="McCombie W.R."/>
            <person name="Ouyang S."/>
            <person name="Schwartz D.C."/>
            <person name="Tanaka T."/>
            <person name="Wu J."/>
            <person name="Zhou S."/>
            <person name="Childs K.L."/>
            <person name="Davidson R.M."/>
            <person name="Lin H."/>
            <person name="Quesada-Ocampo L."/>
            <person name="Vaillancourt B."/>
            <person name="Sakai H."/>
            <person name="Lee S.S."/>
            <person name="Kim J."/>
            <person name="Numa H."/>
            <person name="Itoh T."/>
            <person name="Buell C.R."/>
            <person name="Matsumoto T."/>
        </authorList>
    </citation>
    <scope>GENOME REANNOTATION</scope>
    <source>
        <strain>cv. Nipponbare</strain>
    </source>
</reference>
<reference key="5">
    <citation type="journal article" date="2003" name="Science">
        <title>Collection, mapping, and annotation of over 28,000 cDNA clones from japonica rice.</title>
        <authorList>
            <consortium name="The rice full-length cDNA consortium"/>
        </authorList>
    </citation>
    <scope>NUCLEOTIDE SEQUENCE [LARGE SCALE MRNA] (ISOFORM 2)</scope>
    <source>
        <strain>cv. Nipponbare</strain>
    </source>
</reference>
<reference key="6">
    <citation type="journal article" date="2014" name="Plant Physiol.">
        <title>Functional and evolutionary analysis of the CASPARIAN STRIP MEMBRANE DOMAIN PROTEIN family.</title>
        <authorList>
            <person name="Roppolo D."/>
            <person name="Boeckmann B."/>
            <person name="Pfister A."/>
            <person name="Boutet E."/>
            <person name="Rubio M.C."/>
            <person name="Denervaud-Tendon V."/>
            <person name="Vermeer J.E."/>
            <person name="Gheyselinck J."/>
            <person name="Xenarios I."/>
            <person name="Geldner N."/>
        </authorList>
    </citation>
    <scope>GENE FAMILY</scope>
    <scope>NOMENCLATURE</scope>
</reference>
<dbReference type="EMBL" id="DP000011">
    <property type="protein sequence ID" value="ABA99118.2"/>
    <property type="molecule type" value="Genomic_DNA"/>
</dbReference>
<dbReference type="EMBL" id="AP008218">
    <property type="protein sequence ID" value="BAF29899.1"/>
    <property type="molecule type" value="Genomic_DNA"/>
</dbReference>
<dbReference type="EMBL" id="AP014968">
    <property type="protein sequence ID" value="BAT17357.1"/>
    <property type="molecule type" value="Genomic_DNA"/>
</dbReference>
<dbReference type="EMBL" id="AK062700">
    <property type="status" value="NOT_ANNOTATED_CDS"/>
    <property type="molecule type" value="mRNA"/>
</dbReference>
<dbReference type="RefSeq" id="XP_015619442.1">
    <property type="nucleotide sequence ID" value="XM_015763956.1"/>
</dbReference>
<dbReference type="SMR" id="Q0IN16"/>
<dbReference type="FunCoup" id="Q0IN16">
    <property type="interactions" value="320"/>
</dbReference>
<dbReference type="STRING" id="39947.Q0IN16"/>
<dbReference type="PaxDb" id="39947-Q0IN16"/>
<dbReference type="KEGG" id="dosa:Os12g0514300"/>
<dbReference type="InParanoid" id="Q0IN16"/>
<dbReference type="Proteomes" id="UP000000763">
    <property type="component" value="Chromosome 12"/>
</dbReference>
<dbReference type="Proteomes" id="UP000059680">
    <property type="component" value="Chromosome 12"/>
</dbReference>
<dbReference type="GO" id="GO:0005886">
    <property type="term" value="C:plasma membrane"/>
    <property type="evidence" value="ECO:0007669"/>
    <property type="project" value="UniProtKB-SubCell"/>
</dbReference>
<dbReference type="InterPro" id="IPR006459">
    <property type="entry name" value="CASP/CASPL"/>
</dbReference>
<dbReference type="InterPro" id="IPR006702">
    <property type="entry name" value="CASP_dom"/>
</dbReference>
<dbReference type="NCBIfam" id="TIGR01569">
    <property type="entry name" value="A_tha_TIGR01569"/>
    <property type="match status" value="1"/>
</dbReference>
<dbReference type="PANTHER" id="PTHR33573:SF64">
    <property type="entry name" value="CASP-LIKE PROTEIN 2B1"/>
    <property type="match status" value="1"/>
</dbReference>
<dbReference type="PANTHER" id="PTHR33573">
    <property type="entry name" value="CASP-LIKE PROTEIN 4A4"/>
    <property type="match status" value="1"/>
</dbReference>
<dbReference type="Pfam" id="PF04535">
    <property type="entry name" value="CASP_dom"/>
    <property type="match status" value="1"/>
</dbReference>
<comment type="subunit">
    <text evidence="1">Homodimer and heterodimers.</text>
</comment>
<comment type="subcellular location">
    <subcellularLocation>
        <location evidence="1">Cell membrane</location>
        <topology evidence="1">Multi-pass membrane protein</topology>
    </subcellularLocation>
</comment>
<comment type="alternative products">
    <event type="alternative splicing"/>
    <isoform>
        <id>Q0IN16-1</id>
        <name>1</name>
        <sequence type="displayed"/>
    </isoform>
    <isoform>
        <id>Q0IN16-2</id>
        <name>2</name>
        <sequence type="described" ref="VSP_041636"/>
    </isoform>
</comment>
<comment type="similarity">
    <text evidence="4">Belongs to the Casparian strip membrane proteins (CASP) family.</text>
</comment>
<evidence type="ECO:0000250" key="1"/>
<evidence type="ECO:0000255" key="2"/>
<evidence type="ECO:0000303" key="3">
    <source>
    </source>
</evidence>
<evidence type="ECO:0000305" key="4"/>
<gene>
    <name type="ordered locus">Os12g0514300</name>
    <name type="ordered locus">LOC_Os12g32970</name>
</gene>
<organism>
    <name type="scientific">Oryza sativa subsp. japonica</name>
    <name type="common">Rice</name>
    <dbReference type="NCBI Taxonomy" id="39947"/>
    <lineage>
        <taxon>Eukaryota</taxon>
        <taxon>Viridiplantae</taxon>
        <taxon>Streptophyta</taxon>
        <taxon>Embryophyta</taxon>
        <taxon>Tracheophyta</taxon>
        <taxon>Spermatophyta</taxon>
        <taxon>Magnoliopsida</taxon>
        <taxon>Liliopsida</taxon>
        <taxon>Poales</taxon>
        <taxon>Poaceae</taxon>
        <taxon>BOP clade</taxon>
        <taxon>Oryzoideae</taxon>
        <taxon>Oryzeae</taxon>
        <taxon>Oryzinae</taxon>
        <taxon>Oryza</taxon>
        <taxon>Oryza sativa</taxon>
    </lineage>
</organism>